<organism>
    <name type="scientific">Streptococcus pneumoniae serotype 4 (strain ATCC BAA-334 / TIGR4)</name>
    <dbReference type="NCBI Taxonomy" id="170187"/>
    <lineage>
        <taxon>Bacteria</taxon>
        <taxon>Bacillati</taxon>
        <taxon>Bacillota</taxon>
        <taxon>Bacilli</taxon>
        <taxon>Lactobacillales</taxon>
        <taxon>Streptococcaceae</taxon>
        <taxon>Streptococcus</taxon>
    </lineage>
</organism>
<sequence length="274" mass="31216">MPELPEVETVCRGLEKLIIGKKISSIEIRYPKMIKTDLEEFQRELPSQIIESMGRRGKYLLFYLTDKVLISHLRMEGKYFYYPDQGPERKHAHVFFHFEDGGTLVYEDVRKFGTMELLVPDLLDVYFISKKLGPEPSEQDFDLQVFQSALAKSKKPIKSHLLDQTLVAGLGNIYVDEVLWRAQVHPARPSQTLTAEEATAIHDQTIAVLGQAVEKGGSTIRTYTNAFGEDGSMQDFHQVYDKTGQECVRCGTIIEKIQLGGRGTHFCPNCQRRD</sequence>
<comment type="function">
    <text evidence="2">Involved in base excision repair of DNA damaged by oxidation or by mutagenic agents. Acts as a DNA glycosylase that recognizes and removes damaged bases. Has a preference for oxidized purines, such as 7,8-dihydro-8-oxoguanine (8-oxoG). Has AP (apurinic/apyrimidinic) lyase activity and introduces nicks in the DNA strand. Cleaves the DNA backbone by beta-delta elimination to generate a single-strand break at the site of the removed base with both 3'- and 5'-phosphates.</text>
</comment>
<comment type="catalytic activity">
    <reaction evidence="2">
        <text>Hydrolysis of DNA containing ring-opened 7-methylguanine residues, releasing 2,6-diamino-4-hydroxy-5-(N-methyl)formamidopyrimidine.</text>
        <dbReference type="EC" id="3.2.2.23"/>
    </reaction>
</comment>
<comment type="catalytic activity">
    <reaction evidence="2">
        <text>2'-deoxyribonucleotide-(2'-deoxyribose 5'-phosphate)-2'-deoxyribonucleotide-DNA = a 3'-end 2'-deoxyribonucleotide-(2,3-dehydro-2,3-deoxyribose 5'-phosphate)-DNA + a 5'-end 5'-phospho-2'-deoxyribonucleoside-DNA + H(+)</text>
        <dbReference type="Rhea" id="RHEA:66592"/>
        <dbReference type="Rhea" id="RHEA-COMP:13180"/>
        <dbReference type="Rhea" id="RHEA-COMP:16897"/>
        <dbReference type="Rhea" id="RHEA-COMP:17067"/>
        <dbReference type="ChEBI" id="CHEBI:15378"/>
        <dbReference type="ChEBI" id="CHEBI:136412"/>
        <dbReference type="ChEBI" id="CHEBI:157695"/>
        <dbReference type="ChEBI" id="CHEBI:167181"/>
        <dbReference type="EC" id="4.2.99.18"/>
    </reaction>
</comment>
<comment type="cofactor">
    <cofactor evidence="2">
        <name>Zn(2+)</name>
        <dbReference type="ChEBI" id="CHEBI:29105"/>
    </cofactor>
    <text evidence="2">Binds 1 zinc ion per subunit.</text>
</comment>
<comment type="subunit">
    <text evidence="2">Monomer.</text>
</comment>
<comment type="similarity">
    <text evidence="2">Belongs to the FPG family.</text>
</comment>
<dbReference type="EC" id="3.2.2.23" evidence="2"/>
<dbReference type="EC" id="4.2.99.18" evidence="2"/>
<dbReference type="EMBL" id="AE005672">
    <property type="protein sequence ID" value="AAK75091.1"/>
    <property type="molecule type" value="Genomic_DNA"/>
</dbReference>
<dbReference type="PIR" id="B95112">
    <property type="entry name" value="B95112"/>
</dbReference>
<dbReference type="RefSeq" id="WP_001114592.1">
    <property type="nucleotide sequence ID" value="NZ_CP155539.1"/>
</dbReference>
<dbReference type="SMR" id="Q97R61"/>
<dbReference type="PaxDb" id="170187-SP_0970"/>
<dbReference type="EnsemblBacteria" id="AAK75091">
    <property type="protein sequence ID" value="AAK75091"/>
    <property type="gene ID" value="SP_0970"/>
</dbReference>
<dbReference type="KEGG" id="spn:SP_0970"/>
<dbReference type="eggNOG" id="COG0266">
    <property type="taxonomic scope" value="Bacteria"/>
</dbReference>
<dbReference type="BioCyc" id="SPNE170187:G1FZB-998-MONOMER"/>
<dbReference type="Proteomes" id="UP000000585">
    <property type="component" value="Chromosome"/>
</dbReference>
<dbReference type="GO" id="GO:0034039">
    <property type="term" value="F:8-oxo-7,8-dihydroguanine DNA N-glycosylase activity"/>
    <property type="evidence" value="ECO:0007669"/>
    <property type="project" value="TreeGrafter"/>
</dbReference>
<dbReference type="GO" id="GO:0140078">
    <property type="term" value="F:class I DNA-(apurinic or apyrimidinic site) endonuclease activity"/>
    <property type="evidence" value="ECO:0007669"/>
    <property type="project" value="UniProtKB-EC"/>
</dbReference>
<dbReference type="GO" id="GO:0003684">
    <property type="term" value="F:damaged DNA binding"/>
    <property type="evidence" value="ECO:0007669"/>
    <property type="project" value="InterPro"/>
</dbReference>
<dbReference type="GO" id="GO:0008270">
    <property type="term" value="F:zinc ion binding"/>
    <property type="evidence" value="ECO:0007669"/>
    <property type="project" value="UniProtKB-UniRule"/>
</dbReference>
<dbReference type="GO" id="GO:0006284">
    <property type="term" value="P:base-excision repair"/>
    <property type="evidence" value="ECO:0007669"/>
    <property type="project" value="InterPro"/>
</dbReference>
<dbReference type="CDD" id="cd08966">
    <property type="entry name" value="EcFpg-like_N"/>
    <property type="match status" value="1"/>
</dbReference>
<dbReference type="FunFam" id="1.10.8.50:FF:000003">
    <property type="entry name" value="Formamidopyrimidine-DNA glycosylase"/>
    <property type="match status" value="1"/>
</dbReference>
<dbReference type="FunFam" id="3.20.190.10:FF:000001">
    <property type="entry name" value="Formamidopyrimidine-DNA glycosylase"/>
    <property type="match status" value="1"/>
</dbReference>
<dbReference type="Gene3D" id="1.10.8.50">
    <property type="match status" value="1"/>
</dbReference>
<dbReference type="Gene3D" id="3.20.190.10">
    <property type="entry name" value="MutM-like, N-terminal"/>
    <property type="match status" value="1"/>
</dbReference>
<dbReference type="HAMAP" id="MF_00103">
    <property type="entry name" value="Fapy_DNA_glycosyl"/>
    <property type="match status" value="1"/>
</dbReference>
<dbReference type="InterPro" id="IPR015886">
    <property type="entry name" value="DNA_glyclase/AP_lyase_DNA-bd"/>
</dbReference>
<dbReference type="InterPro" id="IPR015887">
    <property type="entry name" value="DNA_glyclase_Znf_dom_DNA_BS"/>
</dbReference>
<dbReference type="InterPro" id="IPR020629">
    <property type="entry name" value="Formamido-pyr_DNA_Glyclase"/>
</dbReference>
<dbReference type="InterPro" id="IPR012319">
    <property type="entry name" value="FPG_cat"/>
</dbReference>
<dbReference type="InterPro" id="IPR035937">
    <property type="entry name" value="MutM-like_N-ter"/>
</dbReference>
<dbReference type="InterPro" id="IPR010979">
    <property type="entry name" value="Ribosomal_uS13-like_H2TH"/>
</dbReference>
<dbReference type="InterPro" id="IPR000214">
    <property type="entry name" value="Znf_DNA_glyclase/AP_lyase"/>
</dbReference>
<dbReference type="InterPro" id="IPR010663">
    <property type="entry name" value="Znf_FPG/IleRS"/>
</dbReference>
<dbReference type="NCBIfam" id="TIGR00577">
    <property type="entry name" value="fpg"/>
    <property type="match status" value="1"/>
</dbReference>
<dbReference type="NCBIfam" id="NF002211">
    <property type="entry name" value="PRK01103.1"/>
    <property type="match status" value="1"/>
</dbReference>
<dbReference type="PANTHER" id="PTHR22993">
    <property type="entry name" value="FORMAMIDOPYRIMIDINE-DNA GLYCOSYLASE"/>
    <property type="match status" value="1"/>
</dbReference>
<dbReference type="PANTHER" id="PTHR22993:SF9">
    <property type="entry name" value="FORMAMIDOPYRIMIDINE-DNA GLYCOSYLASE"/>
    <property type="match status" value="1"/>
</dbReference>
<dbReference type="Pfam" id="PF01149">
    <property type="entry name" value="Fapy_DNA_glyco"/>
    <property type="match status" value="1"/>
</dbReference>
<dbReference type="Pfam" id="PF06831">
    <property type="entry name" value="H2TH"/>
    <property type="match status" value="1"/>
</dbReference>
<dbReference type="Pfam" id="PF06827">
    <property type="entry name" value="zf-FPG_IleRS"/>
    <property type="match status" value="1"/>
</dbReference>
<dbReference type="SMART" id="SM00898">
    <property type="entry name" value="Fapy_DNA_glyco"/>
    <property type="match status" value="1"/>
</dbReference>
<dbReference type="SMART" id="SM01232">
    <property type="entry name" value="H2TH"/>
    <property type="match status" value="1"/>
</dbReference>
<dbReference type="SUPFAM" id="SSF57716">
    <property type="entry name" value="Glucocorticoid receptor-like (DNA-binding domain)"/>
    <property type="match status" value="1"/>
</dbReference>
<dbReference type="SUPFAM" id="SSF81624">
    <property type="entry name" value="N-terminal domain of MutM-like DNA repair proteins"/>
    <property type="match status" value="1"/>
</dbReference>
<dbReference type="SUPFAM" id="SSF46946">
    <property type="entry name" value="S13-like H2TH domain"/>
    <property type="match status" value="1"/>
</dbReference>
<dbReference type="PROSITE" id="PS51068">
    <property type="entry name" value="FPG_CAT"/>
    <property type="match status" value="1"/>
</dbReference>
<dbReference type="PROSITE" id="PS01242">
    <property type="entry name" value="ZF_FPG_1"/>
    <property type="match status" value="1"/>
</dbReference>
<dbReference type="PROSITE" id="PS51066">
    <property type="entry name" value="ZF_FPG_2"/>
    <property type="match status" value="1"/>
</dbReference>
<evidence type="ECO:0000250" key="1"/>
<evidence type="ECO:0000255" key="2">
    <source>
        <dbReference type="HAMAP-Rule" id="MF_00103"/>
    </source>
</evidence>
<protein>
    <recommendedName>
        <fullName evidence="2">Formamidopyrimidine-DNA glycosylase</fullName>
        <shortName evidence="2">Fapy-DNA glycosylase</shortName>
        <ecNumber evidence="2">3.2.2.23</ecNumber>
    </recommendedName>
    <alternativeName>
        <fullName evidence="2">DNA-(apurinic or apyrimidinic site) lyase MutM</fullName>
        <shortName evidence="2">AP lyase MutM</shortName>
        <ecNumber evidence="2">4.2.99.18</ecNumber>
    </alternativeName>
</protein>
<accession>Q97R61</accession>
<keyword id="KW-0227">DNA damage</keyword>
<keyword id="KW-0234">DNA repair</keyword>
<keyword id="KW-0238">DNA-binding</keyword>
<keyword id="KW-0326">Glycosidase</keyword>
<keyword id="KW-0378">Hydrolase</keyword>
<keyword id="KW-0456">Lyase</keyword>
<keyword id="KW-0479">Metal-binding</keyword>
<keyword id="KW-0511">Multifunctional enzyme</keyword>
<keyword id="KW-1185">Reference proteome</keyword>
<keyword id="KW-0862">Zinc</keyword>
<keyword id="KW-0863">Zinc-finger</keyword>
<proteinExistence type="inferred from homology"/>
<reference key="1">
    <citation type="journal article" date="2001" name="Science">
        <title>Complete genome sequence of a virulent isolate of Streptococcus pneumoniae.</title>
        <authorList>
            <person name="Tettelin H."/>
            <person name="Nelson K.E."/>
            <person name="Paulsen I.T."/>
            <person name="Eisen J.A."/>
            <person name="Read T.D."/>
            <person name="Peterson S.N."/>
            <person name="Heidelberg J.F."/>
            <person name="DeBoy R.T."/>
            <person name="Haft D.H."/>
            <person name="Dodson R.J."/>
            <person name="Durkin A.S."/>
            <person name="Gwinn M.L."/>
            <person name="Kolonay J.F."/>
            <person name="Nelson W.C."/>
            <person name="Peterson J.D."/>
            <person name="Umayam L.A."/>
            <person name="White O."/>
            <person name="Salzberg S.L."/>
            <person name="Lewis M.R."/>
            <person name="Radune D."/>
            <person name="Holtzapple E.K."/>
            <person name="Khouri H.M."/>
            <person name="Wolf A.M."/>
            <person name="Utterback T.R."/>
            <person name="Hansen C.L."/>
            <person name="McDonald L.A."/>
            <person name="Feldblyum T.V."/>
            <person name="Angiuoli S.V."/>
            <person name="Dickinson T."/>
            <person name="Hickey E.K."/>
            <person name="Holt I.E."/>
            <person name="Loftus B.J."/>
            <person name="Yang F."/>
            <person name="Smith H.O."/>
            <person name="Venter J.C."/>
            <person name="Dougherty B.A."/>
            <person name="Morrison D.A."/>
            <person name="Hollingshead S.K."/>
            <person name="Fraser C.M."/>
        </authorList>
    </citation>
    <scope>NUCLEOTIDE SEQUENCE [LARGE SCALE GENOMIC DNA]</scope>
    <source>
        <strain>ATCC BAA-334 / TIGR4</strain>
    </source>
</reference>
<gene>
    <name evidence="2" type="primary">mutM</name>
    <name evidence="2" type="synonym">fpg</name>
    <name type="ordered locus">SP_0970</name>
</gene>
<feature type="initiator methionine" description="Removed" evidence="1">
    <location>
        <position position="1"/>
    </location>
</feature>
<feature type="chain" id="PRO_0000170869" description="Formamidopyrimidine-DNA glycosylase">
    <location>
        <begin position="2"/>
        <end position="274"/>
    </location>
</feature>
<feature type="zinc finger region" description="FPG-type" evidence="2">
    <location>
        <begin position="238"/>
        <end position="272"/>
    </location>
</feature>
<feature type="active site" description="Schiff-base intermediate with DNA" evidence="2">
    <location>
        <position position="2"/>
    </location>
</feature>
<feature type="active site" description="Proton donor" evidence="2">
    <location>
        <position position="3"/>
    </location>
</feature>
<feature type="active site" description="Proton donor; for beta-elimination activity" evidence="2">
    <location>
        <position position="58"/>
    </location>
</feature>
<feature type="active site" description="Proton donor; for delta-elimination activity" evidence="2">
    <location>
        <position position="262"/>
    </location>
</feature>
<feature type="binding site" evidence="2">
    <location>
        <position position="91"/>
    </location>
    <ligand>
        <name>DNA</name>
        <dbReference type="ChEBI" id="CHEBI:16991"/>
    </ligand>
</feature>
<feature type="binding site" evidence="2">
    <location>
        <position position="110"/>
    </location>
    <ligand>
        <name>DNA</name>
        <dbReference type="ChEBI" id="CHEBI:16991"/>
    </ligand>
</feature>
<name>FPG_STRPN</name>